<dbReference type="EMBL" id="CP000821">
    <property type="protein sequence ID" value="ABV35370.1"/>
    <property type="molecule type" value="Genomic_DNA"/>
</dbReference>
<dbReference type="RefSeq" id="WP_005497284.1">
    <property type="nucleotide sequence ID" value="NC_009831.1"/>
</dbReference>
<dbReference type="SMR" id="A8FR97"/>
<dbReference type="STRING" id="425104.Ssed_0759"/>
<dbReference type="KEGG" id="sse:Ssed_0759"/>
<dbReference type="eggNOG" id="COG0238">
    <property type="taxonomic scope" value="Bacteria"/>
</dbReference>
<dbReference type="HOGENOM" id="CLU_148710_2_3_6"/>
<dbReference type="OrthoDB" id="9812008at2"/>
<dbReference type="Proteomes" id="UP000002015">
    <property type="component" value="Chromosome"/>
</dbReference>
<dbReference type="GO" id="GO:0022627">
    <property type="term" value="C:cytosolic small ribosomal subunit"/>
    <property type="evidence" value="ECO:0007669"/>
    <property type="project" value="TreeGrafter"/>
</dbReference>
<dbReference type="GO" id="GO:0070181">
    <property type="term" value="F:small ribosomal subunit rRNA binding"/>
    <property type="evidence" value="ECO:0007669"/>
    <property type="project" value="TreeGrafter"/>
</dbReference>
<dbReference type="GO" id="GO:0003735">
    <property type="term" value="F:structural constituent of ribosome"/>
    <property type="evidence" value="ECO:0007669"/>
    <property type="project" value="InterPro"/>
</dbReference>
<dbReference type="GO" id="GO:0006412">
    <property type="term" value="P:translation"/>
    <property type="evidence" value="ECO:0007669"/>
    <property type="project" value="UniProtKB-UniRule"/>
</dbReference>
<dbReference type="FunFam" id="4.10.640.10:FF:000001">
    <property type="entry name" value="30S ribosomal protein S18"/>
    <property type="match status" value="1"/>
</dbReference>
<dbReference type="Gene3D" id="4.10.640.10">
    <property type="entry name" value="Ribosomal protein S18"/>
    <property type="match status" value="1"/>
</dbReference>
<dbReference type="HAMAP" id="MF_00270">
    <property type="entry name" value="Ribosomal_bS18"/>
    <property type="match status" value="1"/>
</dbReference>
<dbReference type="InterPro" id="IPR001648">
    <property type="entry name" value="Ribosomal_bS18"/>
</dbReference>
<dbReference type="InterPro" id="IPR018275">
    <property type="entry name" value="Ribosomal_bS18_CS"/>
</dbReference>
<dbReference type="InterPro" id="IPR036870">
    <property type="entry name" value="Ribosomal_bS18_sf"/>
</dbReference>
<dbReference type="NCBIfam" id="TIGR00165">
    <property type="entry name" value="S18"/>
    <property type="match status" value="1"/>
</dbReference>
<dbReference type="PANTHER" id="PTHR13479">
    <property type="entry name" value="30S RIBOSOMAL PROTEIN S18"/>
    <property type="match status" value="1"/>
</dbReference>
<dbReference type="PANTHER" id="PTHR13479:SF40">
    <property type="entry name" value="SMALL RIBOSOMAL SUBUNIT PROTEIN BS18M"/>
    <property type="match status" value="1"/>
</dbReference>
<dbReference type="Pfam" id="PF01084">
    <property type="entry name" value="Ribosomal_S18"/>
    <property type="match status" value="1"/>
</dbReference>
<dbReference type="PRINTS" id="PR00974">
    <property type="entry name" value="RIBOSOMALS18"/>
</dbReference>
<dbReference type="SUPFAM" id="SSF46911">
    <property type="entry name" value="Ribosomal protein S18"/>
    <property type="match status" value="1"/>
</dbReference>
<dbReference type="PROSITE" id="PS00057">
    <property type="entry name" value="RIBOSOMAL_S18"/>
    <property type="match status" value="1"/>
</dbReference>
<proteinExistence type="inferred from homology"/>
<accession>A8FR97</accession>
<evidence type="ECO:0000255" key="1">
    <source>
        <dbReference type="HAMAP-Rule" id="MF_00270"/>
    </source>
</evidence>
<evidence type="ECO:0000305" key="2"/>
<name>RS18_SHESH</name>
<sequence length="75" mass="8902">MARYFRRRKFCRFTAEGVTEIDYKDIVTLKNYITESGKIVPSRITGTNAKYQRQLARAIKRARYLSLLPYTDLHQ</sequence>
<gene>
    <name evidence="1" type="primary">rpsR</name>
    <name type="ordered locus">Ssed_0759</name>
</gene>
<reference key="1">
    <citation type="submission" date="2007-08" db="EMBL/GenBank/DDBJ databases">
        <title>Complete sequence of Shewanella sediminis HAW-EB3.</title>
        <authorList>
            <consortium name="US DOE Joint Genome Institute"/>
            <person name="Copeland A."/>
            <person name="Lucas S."/>
            <person name="Lapidus A."/>
            <person name="Barry K."/>
            <person name="Glavina del Rio T."/>
            <person name="Dalin E."/>
            <person name="Tice H."/>
            <person name="Pitluck S."/>
            <person name="Chertkov O."/>
            <person name="Brettin T."/>
            <person name="Bruce D."/>
            <person name="Detter J.C."/>
            <person name="Han C."/>
            <person name="Schmutz J."/>
            <person name="Larimer F."/>
            <person name="Land M."/>
            <person name="Hauser L."/>
            <person name="Kyrpides N."/>
            <person name="Kim E."/>
            <person name="Zhao J.-S."/>
            <person name="Richardson P."/>
        </authorList>
    </citation>
    <scope>NUCLEOTIDE SEQUENCE [LARGE SCALE GENOMIC DNA]</scope>
    <source>
        <strain>HAW-EB3</strain>
    </source>
</reference>
<keyword id="KW-1185">Reference proteome</keyword>
<keyword id="KW-0687">Ribonucleoprotein</keyword>
<keyword id="KW-0689">Ribosomal protein</keyword>
<keyword id="KW-0694">RNA-binding</keyword>
<keyword id="KW-0699">rRNA-binding</keyword>
<feature type="chain" id="PRO_1000078715" description="Small ribosomal subunit protein bS18">
    <location>
        <begin position="1"/>
        <end position="75"/>
    </location>
</feature>
<organism>
    <name type="scientific">Shewanella sediminis (strain HAW-EB3)</name>
    <dbReference type="NCBI Taxonomy" id="425104"/>
    <lineage>
        <taxon>Bacteria</taxon>
        <taxon>Pseudomonadati</taxon>
        <taxon>Pseudomonadota</taxon>
        <taxon>Gammaproteobacteria</taxon>
        <taxon>Alteromonadales</taxon>
        <taxon>Shewanellaceae</taxon>
        <taxon>Shewanella</taxon>
    </lineage>
</organism>
<comment type="function">
    <text evidence="1">Binds as a heterodimer with protein bS6 to the central domain of the 16S rRNA, where it helps stabilize the platform of the 30S subunit.</text>
</comment>
<comment type="subunit">
    <text evidence="1">Part of the 30S ribosomal subunit. Forms a tight heterodimer with protein bS6.</text>
</comment>
<comment type="similarity">
    <text evidence="1">Belongs to the bacterial ribosomal protein bS18 family.</text>
</comment>
<protein>
    <recommendedName>
        <fullName evidence="1">Small ribosomal subunit protein bS18</fullName>
    </recommendedName>
    <alternativeName>
        <fullName evidence="2">30S ribosomal protein S18</fullName>
    </alternativeName>
</protein>